<name>Y5685_DICDI</name>
<comment type="similarity">
    <text evidence="1">Belongs to the hssA/B family.</text>
</comment>
<gene>
    <name type="ORF">DDB_G0295685</name>
</gene>
<reference key="1">
    <citation type="journal article" date="2002" name="Nature">
        <title>Sequence and analysis of chromosome 2 of Dictyostelium discoideum.</title>
        <authorList>
            <person name="Gloeckner G."/>
            <person name="Eichinger L."/>
            <person name="Szafranski K."/>
            <person name="Pachebat J.A."/>
            <person name="Bankier A.T."/>
            <person name="Dear P.H."/>
            <person name="Lehmann R."/>
            <person name="Baumgart C."/>
            <person name="Parra G."/>
            <person name="Abril J.F."/>
            <person name="Guigo R."/>
            <person name="Kumpf K."/>
            <person name="Tunggal B."/>
            <person name="Cox E.C."/>
            <person name="Quail M.A."/>
            <person name="Platzer M."/>
            <person name="Rosenthal A."/>
            <person name="Noegel A.A."/>
        </authorList>
    </citation>
    <scope>NUCLEOTIDE SEQUENCE [LARGE SCALE GENOMIC DNA]</scope>
    <source>
        <strain>AX4</strain>
    </source>
</reference>
<reference key="2">
    <citation type="journal article" date="2005" name="Nature">
        <title>The genome of the social amoeba Dictyostelium discoideum.</title>
        <authorList>
            <person name="Eichinger L."/>
            <person name="Pachebat J.A."/>
            <person name="Gloeckner G."/>
            <person name="Rajandream M.A."/>
            <person name="Sucgang R."/>
            <person name="Berriman M."/>
            <person name="Song J."/>
            <person name="Olsen R."/>
            <person name="Szafranski K."/>
            <person name="Xu Q."/>
            <person name="Tunggal B."/>
            <person name="Kummerfeld S."/>
            <person name="Madera M."/>
            <person name="Konfortov B.A."/>
            <person name="Rivero F."/>
            <person name="Bankier A.T."/>
            <person name="Lehmann R."/>
            <person name="Hamlin N."/>
            <person name="Davies R."/>
            <person name="Gaudet P."/>
            <person name="Fey P."/>
            <person name="Pilcher K."/>
            <person name="Chen G."/>
            <person name="Saunders D."/>
            <person name="Sodergren E.J."/>
            <person name="Davis P."/>
            <person name="Kerhornou A."/>
            <person name="Nie X."/>
            <person name="Hall N."/>
            <person name="Anjard C."/>
            <person name="Hemphill L."/>
            <person name="Bason N."/>
            <person name="Farbrother P."/>
            <person name="Desany B."/>
            <person name="Just E."/>
            <person name="Morio T."/>
            <person name="Rost R."/>
            <person name="Churcher C.M."/>
            <person name="Cooper J."/>
            <person name="Haydock S."/>
            <person name="van Driessche N."/>
            <person name="Cronin A."/>
            <person name="Goodhead I."/>
            <person name="Muzny D.M."/>
            <person name="Mourier T."/>
            <person name="Pain A."/>
            <person name="Lu M."/>
            <person name="Harper D."/>
            <person name="Lindsay R."/>
            <person name="Hauser H."/>
            <person name="James K.D."/>
            <person name="Quiles M."/>
            <person name="Madan Babu M."/>
            <person name="Saito T."/>
            <person name="Buchrieser C."/>
            <person name="Wardroper A."/>
            <person name="Felder M."/>
            <person name="Thangavelu M."/>
            <person name="Johnson D."/>
            <person name="Knights A."/>
            <person name="Loulseged H."/>
            <person name="Mungall K.L."/>
            <person name="Oliver K."/>
            <person name="Price C."/>
            <person name="Quail M.A."/>
            <person name="Urushihara H."/>
            <person name="Hernandez J."/>
            <person name="Rabbinowitsch E."/>
            <person name="Steffen D."/>
            <person name="Sanders M."/>
            <person name="Ma J."/>
            <person name="Kohara Y."/>
            <person name="Sharp S."/>
            <person name="Simmonds M.N."/>
            <person name="Spiegler S."/>
            <person name="Tivey A."/>
            <person name="Sugano S."/>
            <person name="White B."/>
            <person name="Walker D."/>
            <person name="Woodward J.R."/>
            <person name="Winckler T."/>
            <person name="Tanaka Y."/>
            <person name="Shaulsky G."/>
            <person name="Schleicher M."/>
            <person name="Weinstock G.M."/>
            <person name="Rosenthal A."/>
            <person name="Cox E.C."/>
            <person name="Chisholm R.L."/>
            <person name="Gibbs R.A."/>
            <person name="Loomis W.F."/>
            <person name="Platzer M."/>
            <person name="Kay R.R."/>
            <person name="Williams J.G."/>
            <person name="Dear P.H."/>
            <person name="Noegel A.A."/>
            <person name="Barrell B.G."/>
            <person name="Kuspa A."/>
        </authorList>
    </citation>
    <scope>NUCLEOTIDE SEQUENCE [LARGE SCALE GENOMIC DNA]</scope>
    <source>
        <strain>AX4</strain>
    </source>
</reference>
<accession>Q86HG4</accession>
<accession>Q55AM3</accession>
<feature type="chain" id="PRO_0000384440" description="HssA/B-like protein DDB_G0295685">
    <location>
        <begin position="1"/>
        <end position="89"/>
    </location>
</feature>
<proteinExistence type="inferred from homology"/>
<keyword id="KW-1185">Reference proteome</keyword>
<protein>
    <recommendedName>
        <fullName>HssA/B-like protein DDB_G0295685</fullName>
    </recommendedName>
</protein>
<dbReference type="EMBL" id="AAFI02000006">
    <property type="protein sequence ID" value="EAL71545.1"/>
    <property type="molecule type" value="Genomic_DNA"/>
</dbReference>
<dbReference type="RefSeq" id="XP_645499.1">
    <property type="nucleotide sequence ID" value="XM_640407.1"/>
</dbReference>
<dbReference type="FunCoup" id="Q86HG4">
    <property type="interactions" value="108"/>
</dbReference>
<dbReference type="PaxDb" id="44689-DDB0238817"/>
<dbReference type="EnsemblProtists" id="EAL71545">
    <property type="protein sequence ID" value="EAL71545"/>
    <property type="gene ID" value="DDB_G0295685"/>
</dbReference>
<dbReference type="GeneID" id="8618127"/>
<dbReference type="KEGG" id="ddi:DDB_G0295685"/>
<dbReference type="dictyBase" id="DDB_G0295685">
    <property type="gene designation" value="sigN10"/>
</dbReference>
<dbReference type="HOGENOM" id="CLU_190274_0_0_1"/>
<dbReference type="InParanoid" id="Q86HG4"/>
<dbReference type="OMA" id="QYSPCGG"/>
<dbReference type="PRO" id="PR:Q86HG4"/>
<dbReference type="Proteomes" id="UP000002195">
    <property type="component" value="Chromosome 2"/>
</dbReference>
<dbReference type="InterPro" id="IPR008455">
    <property type="entry name" value="HssA/B-related"/>
</dbReference>
<dbReference type="PANTHER" id="PTHR31857">
    <property type="entry name" value="HSSA/B-LIKE PROTEIN 17-RELATED"/>
    <property type="match status" value="1"/>
</dbReference>
<dbReference type="PANTHER" id="PTHR31857:SF2">
    <property type="entry name" value="HSSA_B-LIKE PROTEIN 17-RELATED"/>
    <property type="match status" value="1"/>
</dbReference>
<dbReference type="Pfam" id="PF05710">
    <property type="entry name" value="Coiled"/>
    <property type="match status" value="1"/>
</dbReference>
<sequence length="89" mass="8778">MTILASISSIGNVKSITKSKNVSFSSSSPSSSQSLNSIQYSPCGGPTLGNVVGNLVGGVLIGTGVIVGSVLNTVGTITNPILHPSCGCN</sequence>
<organism>
    <name type="scientific">Dictyostelium discoideum</name>
    <name type="common">Social amoeba</name>
    <dbReference type="NCBI Taxonomy" id="44689"/>
    <lineage>
        <taxon>Eukaryota</taxon>
        <taxon>Amoebozoa</taxon>
        <taxon>Evosea</taxon>
        <taxon>Eumycetozoa</taxon>
        <taxon>Dictyostelia</taxon>
        <taxon>Dictyosteliales</taxon>
        <taxon>Dictyosteliaceae</taxon>
        <taxon>Dictyostelium</taxon>
    </lineage>
</organism>
<evidence type="ECO:0000305" key="1"/>